<organism>
    <name type="scientific">Pteronura brasiliensis</name>
    <name type="common">Giant otter</name>
    <dbReference type="NCBI Taxonomy" id="9672"/>
    <lineage>
        <taxon>Eukaryota</taxon>
        <taxon>Metazoa</taxon>
        <taxon>Chordata</taxon>
        <taxon>Craniata</taxon>
        <taxon>Vertebrata</taxon>
        <taxon>Euteleostomi</taxon>
        <taxon>Mammalia</taxon>
        <taxon>Eutheria</taxon>
        <taxon>Laurasiatheria</taxon>
        <taxon>Carnivora</taxon>
        <taxon>Caniformia</taxon>
        <taxon>Musteloidea</taxon>
        <taxon>Mustelidae</taxon>
        <taxon>Lutrinae</taxon>
        <taxon>Pteronura</taxon>
    </lineage>
</organism>
<feature type="chain" id="PRO_0000061455" description="Cytochrome b">
    <location>
        <begin position="1"/>
        <end position="379"/>
    </location>
</feature>
<feature type="transmembrane region" description="Helical" evidence="2">
    <location>
        <begin position="33"/>
        <end position="53"/>
    </location>
</feature>
<feature type="transmembrane region" description="Helical" evidence="2">
    <location>
        <begin position="77"/>
        <end position="98"/>
    </location>
</feature>
<feature type="transmembrane region" description="Helical" evidence="2">
    <location>
        <begin position="113"/>
        <end position="133"/>
    </location>
</feature>
<feature type="transmembrane region" description="Helical" evidence="2">
    <location>
        <begin position="178"/>
        <end position="198"/>
    </location>
</feature>
<feature type="transmembrane region" description="Helical" evidence="2">
    <location>
        <begin position="226"/>
        <end position="246"/>
    </location>
</feature>
<feature type="transmembrane region" description="Helical" evidence="2">
    <location>
        <begin position="288"/>
        <end position="308"/>
    </location>
</feature>
<feature type="transmembrane region" description="Helical" evidence="2">
    <location>
        <begin position="320"/>
        <end position="340"/>
    </location>
</feature>
<feature type="transmembrane region" description="Helical" evidence="2">
    <location>
        <begin position="347"/>
        <end position="367"/>
    </location>
</feature>
<feature type="binding site" description="axial binding residue" evidence="2">
    <location>
        <position position="83"/>
    </location>
    <ligand>
        <name>heme b</name>
        <dbReference type="ChEBI" id="CHEBI:60344"/>
        <label>b562</label>
    </ligand>
    <ligandPart>
        <name>Fe</name>
        <dbReference type="ChEBI" id="CHEBI:18248"/>
    </ligandPart>
</feature>
<feature type="binding site" description="axial binding residue" evidence="2">
    <location>
        <position position="97"/>
    </location>
    <ligand>
        <name>heme b</name>
        <dbReference type="ChEBI" id="CHEBI:60344"/>
        <label>b566</label>
    </ligand>
    <ligandPart>
        <name>Fe</name>
        <dbReference type="ChEBI" id="CHEBI:18248"/>
    </ligandPart>
</feature>
<feature type="binding site" description="axial binding residue" evidence="2">
    <location>
        <position position="182"/>
    </location>
    <ligand>
        <name>heme b</name>
        <dbReference type="ChEBI" id="CHEBI:60344"/>
        <label>b562</label>
    </ligand>
    <ligandPart>
        <name>Fe</name>
        <dbReference type="ChEBI" id="CHEBI:18248"/>
    </ligandPart>
</feature>
<feature type="binding site" description="axial binding residue" evidence="2">
    <location>
        <position position="196"/>
    </location>
    <ligand>
        <name>heme b</name>
        <dbReference type="ChEBI" id="CHEBI:60344"/>
        <label>b566</label>
    </ligand>
    <ligandPart>
        <name>Fe</name>
        <dbReference type="ChEBI" id="CHEBI:18248"/>
    </ligandPart>
</feature>
<feature type="binding site" evidence="2">
    <location>
        <position position="201"/>
    </location>
    <ligand>
        <name>a ubiquinone</name>
        <dbReference type="ChEBI" id="CHEBI:16389"/>
    </ligand>
</feature>
<name>CYB_PTEBR</name>
<protein>
    <recommendedName>
        <fullName>Cytochrome b</fullName>
    </recommendedName>
    <alternativeName>
        <fullName>Complex III subunit 3</fullName>
    </alternativeName>
    <alternativeName>
        <fullName>Complex III subunit III</fullName>
    </alternativeName>
    <alternativeName>
        <fullName>Cytochrome b-c1 complex subunit 3</fullName>
    </alternativeName>
    <alternativeName>
        <fullName>Ubiquinol-cytochrome-c reductase complex cytochrome b subunit</fullName>
    </alternativeName>
</protein>
<dbReference type="EMBL" id="AF057126">
    <property type="protein sequence ID" value="AAC33706.1"/>
    <property type="molecule type" value="Genomic_DNA"/>
</dbReference>
<dbReference type="SMR" id="O78933"/>
<dbReference type="GO" id="GO:0005743">
    <property type="term" value="C:mitochondrial inner membrane"/>
    <property type="evidence" value="ECO:0007669"/>
    <property type="project" value="UniProtKB-SubCell"/>
</dbReference>
<dbReference type="GO" id="GO:0045275">
    <property type="term" value="C:respiratory chain complex III"/>
    <property type="evidence" value="ECO:0007669"/>
    <property type="project" value="InterPro"/>
</dbReference>
<dbReference type="GO" id="GO:0046872">
    <property type="term" value="F:metal ion binding"/>
    <property type="evidence" value="ECO:0007669"/>
    <property type="project" value="UniProtKB-KW"/>
</dbReference>
<dbReference type="GO" id="GO:0008121">
    <property type="term" value="F:ubiquinol-cytochrome-c reductase activity"/>
    <property type="evidence" value="ECO:0007669"/>
    <property type="project" value="InterPro"/>
</dbReference>
<dbReference type="GO" id="GO:0006122">
    <property type="term" value="P:mitochondrial electron transport, ubiquinol to cytochrome c"/>
    <property type="evidence" value="ECO:0007669"/>
    <property type="project" value="TreeGrafter"/>
</dbReference>
<dbReference type="CDD" id="cd00290">
    <property type="entry name" value="cytochrome_b_C"/>
    <property type="match status" value="1"/>
</dbReference>
<dbReference type="CDD" id="cd00284">
    <property type="entry name" value="Cytochrome_b_N"/>
    <property type="match status" value="1"/>
</dbReference>
<dbReference type="FunFam" id="1.20.810.10:FF:000002">
    <property type="entry name" value="Cytochrome b"/>
    <property type="match status" value="1"/>
</dbReference>
<dbReference type="Gene3D" id="1.20.810.10">
    <property type="entry name" value="Cytochrome Bc1 Complex, Chain C"/>
    <property type="match status" value="1"/>
</dbReference>
<dbReference type="InterPro" id="IPR005798">
    <property type="entry name" value="Cyt_b/b6_C"/>
</dbReference>
<dbReference type="InterPro" id="IPR036150">
    <property type="entry name" value="Cyt_b/b6_C_sf"/>
</dbReference>
<dbReference type="InterPro" id="IPR005797">
    <property type="entry name" value="Cyt_b/b6_N"/>
</dbReference>
<dbReference type="InterPro" id="IPR027387">
    <property type="entry name" value="Cytb/b6-like_sf"/>
</dbReference>
<dbReference type="InterPro" id="IPR030689">
    <property type="entry name" value="Cytochrome_b"/>
</dbReference>
<dbReference type="InterPro" id="IPR048260">
    <property type="entry name" value="Cytochrome_b_C_euk/bac"/>
</dbReference>
<dbReference type="InterPro" id="IPR048259">
    <property type="entry name" value="Cytochrome_b_N_euk/bac"/>
</dbReference>
<dbReference type="InterPro" id="IPR016174">
    <property type="entry name" value="Di-haem_cyt_TM"/>
</dbReference>
<dbReference type="PANTHER" id="PTHR19271">
    <property type="entry name" value="CYTOCHROME B"/>
    <property type="match status" value="1"/>
</dbReference>
<dbReference type="PANTHER" id="PTHR19271:SF16">
    <property type="entry name" value="CYTOCHROME B"/>
    <property type="match status" value="1"/>
</dbReference>
<dbReference type="Pfam" id="PF00032">
    <property type="entry name" value="Cytochrom_B_C"/>
    <property type="match status" value="1"/>
</dbReference>
<dbReference type="Pfam" id="PF00033">
    <property type="entry name" value="Cytochrome_B"/>
    <property type="match status" value="1"/>
</dbReference>
<dbReference type="PIRSF" id="PIRSF038885">
    <property type="entry name" value="COB"/>
    <property type="match status" value="1"/>
</dbReference>
<dbReference type="SUPFAM" id="SSF81648">
    <property type="entry name" value="a domain/subunit of cytochrome bc1 complex (Ubiquinol-cytochrome c reductase)"/>
    <property type="match status" value="1"/>
</dbReference>
<dbReference type="SUPFAM" id="SSF81342">
    <property type="entry name" value="Transmembrane di-heme cytochromes"/>
    <property type="match status" value="1"/>
</dbReference>
<dbReference type="PROSITE" id="PS51003">
    <property type="entry name" value="CYTB_CTER"/>
    <property type="match status" value="1"/>
</dbReference>
<dbReference type="PROSITE" id="PS51002">
    <property type="entry name" value="CYTB_NTER"/>
    <property type="match status" value="1"/>
</dbReference>
<evidence type="ECO:0000250" key="1"/>
<evidence type="ECO:0000250" key="2">
    <source>
        <dbReference type="UniProtKB" id="P00157"/>
    </source>
</evidence>
<evidence type="ECO:0000255" key="3">
    <source>
        <dbReference type="PROSITE-ProRule" id="PRU00967"/>
    </source>
</evidence>
<evidence type="ECO:0000255" key="4">
    <source>
        <dbReference type="PROSITE-ProRule" id="PRU00968"/>
    </source>
</evidence>
<proteinExistence type="inferred from homology"/>
<accession>O78933</accession>
<reference key="1">
    <citation type="journal article" date="1998" name="J. Zool. (Lond.)">
        <title>Phylogenetic relationships of otters (Carnivora: Mustelidae) based on mitochondrial cytochrome b sequences.</title>
        <authorList>
            <person name="Koepfli K.-P."/>
            <person name="Wayne R.K."/>
        </authorList>
    </citation>
    <scope>NUCLEOTIDE SEQUENCE [GENOMIC DNA]</scope>
</reference>
<comment type="function">
    <text evidence="2">Component of the ubiquinol-cytochrome c reductase complex (complex III or cytochrome b-c1 complex) that is part of the mitochondrial respiratory chain. The b-c1 complex mediates electron transfer from ubiquinol to cytochrome c. Contributes to the generation of a proton gradient across the mitochondrial membrane that is then used for ATP synthesis.</text>
</comment>
<comment type="cofactor">
    <cofactor evidence="2">
        <name>heme b</name>
        <dbReference type="ChEBI" id="CHEBI:60344"/>
    </cofactor>
    <text evidence="2">Binds 2 heme b groups non-covalently.</text>
</comment>
<comment type="subunit">
    <text evidence="2">The cytochrome bc1 complex contains 11 subunits: 3 respiratory subunits (MT-CYB, CYC1 and UQCRFS1), 2 core proteins (UQCRC1 and UQCRC2) and 6 low-molecular weight proteins (UQCRH/QCR6, UQCRB/QCR7, UQCRQ/QCR8, UQCR10/QCR9, UQCR11/QCR10 and a cleavage product of UQCRFS1). This cytochrome bc1 complex then forms a dimer.</text>
</comment>
<comment type="subcellular location">
    <subcellularLocation>
        <location evidence="2">Mitochondrion inner membrane</location>
        <topology evidence="2">Multi-pass membrane protein</topology>
    </subcellularLocation>
</comment>
<comment type="miscellaneous">
    <text evidence="1">Heme 1 (or BL or b562) is low-potential and absorbs at about 562 nm, and heme 2 (or BH or b566) is high-potential and absorbs at about 566 nm.</text>
</comment>
<comment type="similarity">
    <text evidence="3 4">Belongs to the cytochrome b family.</text>
</comment>
<comment type="caution">
    <text evidence="2">The full-length protein contains only eight transmembrane helices, not nine as predicted by bioinformatics tools.</text>
</comment>
<geneLocation type="mitochondrion"/>
<sequence>MTNIRKTHPLIKIINNSFIDLPTPSNISAWWNFGSLLGICLILQILTGLFLAMHYTSDTTTAFSSVAHICRDVNYGWIIRYMHANGASMFFICLFLHVGRGLYYGSYMFYETWNIGIILLFTVMATAFMGYVLPWGQMSFWGATVITNLLSAIPYIGTNLVEWIWGGFSVDKATLTRFFAFHFILPFAIAALATIHLLFLHETGSNNPSGIPSDSDKIPFHPYYTIKDIMGTMFLILMLMALALFSPDLLGDPDNYTPANPLNTPPHIKPEWYFLFAYAILRSIPNKLGGVLALILSILVLVIIPLLHTSKQRSMMFRPLSQCLFWLLVADLLTLTWIGGQPVEHPFIIIGQLASILYFVILLILMPTISIIENNLLKW</sequence>
<keyword id="KW-0249">Electron transport</keyword>
<keyword id="KW-0349">Heme</keyword>
<keyword id="KW-0408">Iron</keyword>
<keyword id="KW-0472">Membrane</keyword>
<keyword id="KW-0479">Metal-binding</keyword>
<keyword id="KW-0496">Mitochondrion</keyword>
<keyword id="KW-0999">Mitochondrion inner membrane</keyword>
<keyword id="KW-0679">Respiratory chain</keyword>
<keyword id="KW-0812">Transmembrane</keyword>
<keyword id="KW-1133">Transmembrane helix</keyword>
<keyword id="KW-0813">Transport</keyword>
<keyword id="KW-0830">Ubiquinone</keyword>
<gene>
    <name type="primary">MT-CYB</name>
    <name type="synonym">COB</name>
    <name type="synonym">CYTB</name>
    <name type="synonym">MTCYB</name>
</gene>